<organism>
    <name type="scientific">Rattus norvegicus</name>
    <name type="common">Rat</name>
    <dbReference type="NCBI Taxonomy" id="10116"/>
    <lineage>
        <taxon>Eukaryota</taxon>
        <taxon>Metazoa</taxon>
        <taxon>Chordata</taxon>
        <taxon>Craniata</taxon>
        <taxon>Vertebrata</taxon>
        <taxon>Euteleostomi</taxon>
        <taxon>Mammalia</taxon>
        <taxon>Eutheria</taxon>
        <taxon>Euarchontoglires</taxon>
        <taxon>Glires</taxon>
        <taxon>Rodentia</taxon>
        <taxon>Myomorpha</taxon>
        <taxon>Muroidea</taxon>
        <taxon>Muridae</taxon>
        <taxon>Murinae</taxon>
        <taxon>Rattus</taxon>
    </lineage>
</organism>
<keyword id="KW-0963">Cytoplasm</keyword>
<keyword id="KW-0488">Methylation</keyword>
<keyword id="KW-0496">Mitochondrion</keyword>
<keyword id="KW-0539">Nucleus</keyword>
<keyword id="KW-1185">Reference proteome</keyword>
<keyword id="KW-0833">Ubl conjugation pathway</keyword>
<proteinExistence type="evidence at transcript level"/>
<accession>Q68FS3</accession>
<reference key="1">
    <citation type="journal article" date="2004" name="Genome Res.">
        <title>The status, quality, and expansion of the NIH full-length cDNA project: the Mammalian Gene Collection (MGC).</title>
        <authorList>
            <consortium name="The MGC Project Team"/>
        </authorList>
    </citation>
    <scope>NUCLEOTIDE SEQUENCE [LARGE SCALE MRNA]</scope>
    <source>
        <tissue>Testis</tissue>
    </source>
</reference>
<gene>
    <name type="primary">Fbxo7</name>
</gene>
<name>FBX7_RAT</name>
<comment type="function">
    <text evidence="2 3">Substrate recognition component of a SCF (SKP1-CUL1-F-box protein) E3 ubiquitin-protein ligase complex which mediates the ubiquitination and subsequent proteasomal degradation of target proteins and plays a role in several biological processes such as cell cycle, cell proliferation, or maintenance of chromosome stability. Recognizes and ubiquitinates BIRC2 and the cell cycle regulator DLGAP5. Plays a role downstream of PINK1 in the clearance of damaged mitochondria via selective autophagy (mitophagy) by targeting PRKN to dysfunctional depolarized mitochondria. Promotes MFN1 ubiquitination. Mediates the ubiquitination and proteasomal degradation of UXT isoform 2, thereby impairing the NF-kappa-B signaling pathway. Inhibits NF-kappa-B pathway also by promoting the ubiquitinatioin of TRAF2 (By similarity). Affects the assembly state and activity of the proteasome in the cells including neurons by ubiquitinating the proteasomal subunit PSMA2 via 'Lys-63'-linked polyubiquitin chains (By similarity). Promotes 'Lys-48'-linked polyubiquitination SIRT7, leading to the hydrogen peroxide-induced cell death (By similarity).</text>
</comment>
<comment type="pathway">
    <text>Protein modification; protein ubiquitination.</text>
</comment>
<comment type="subunit">
    <text evidence="1">Part of the SCF (SKP1-CUL1-F-box) E3 ubiquitin-protein ligase complex SCF(FBXO7) formed of CUL1, SKP1, RBX1 and FBXO7. Interacts via its C-terminal proline-rich region with DLGAP5. Interacts with BIRC2. Interacts with CDK6 and promotes its interaction with D-type cyclin. Interacts (via the N-terminal Ubl domain) with PRKN. Interacts (via N-terminal region) with PINK1. Interacts with PSMF1 (By similarity).</text>
</comment>
<comment type="subcellular location">
    <subcellularLocation>
        <location evidence="1">Cytoplasm</location>
    </subcellularLocation>
    <subcellularLocation>
        <location evidence="1">Nucleus</location>
    </subcellularLocation>
    <subcellularLocation>
        <location evidence="1">Mitochondrion</location>
    </subcellularLocation>
    <subcellularLocation>
        <location evidence="1">Cytoplasm</location>
        <location evidence="1">Cytosol</location>
    </subcellularLocation>
    <text evidence="1">Predominantly cytoplasmic. A minor proportion is detected in the nucleus. Relocates from the cytosol to depolarized mitochondria (By similarity).</text>
</comment>
<comment type="domain">
    <text evidence="1">The ubiquitin-like region mediates interaction with PRKN.</text>
</comment>
<comment type="domain">
    <text evidence="1">The proline-rich region is important for protein-protein interactions.</text>
</comment>
<sequence>MKLRVRLQKRTQPLEVPESEPTLGQLRAHLIQDLLPTLGFSSDTRFAITLNNKDALTGDEETLASYGIVSGDLICLVLEDEMPAPNLPSSTDSEHSSLQNNDQPPLAATSSQANIPDEQGSDSSHGQVTQYDAWTDDSMEGPSHSAEAVSIQDAMSVEEASGFHPLEPMLCSETEDGQVPHSLEALYQSAGCSTVSDALIVLVHLLMLESGYIPQGTEAKAASMPEKWKSSGVYKLQYTHPLCEGGSAVLTCVPLGKLIMINATIKVNGGIKNVKSVQLKPGAYVRRAEPGESAAKVYKDLKKLSRLFKDQLVYPLLAFTRQVLNLPDVFGLVVLPLELKLRIFRLLDVHSVLALSAVCHDLLIASNDPLLWRCLYLRDFRDSTIRGPDTDWKELYRKKHIQRKEAQRMRHVMYLPSVHPIPFCPIPVYPRPYLPTTLLPPGIIGGEYDERPILPSVGDPVTSLIPRPGEPPSQFRPVRPRFDPVGPLPGSNSLLPGRASPNNRFPFRPGRGRSADNRLPYL</sequence>
<evidence type="ECO:0000250" key="1"/>
<evidence type="ECO:0000250" key="2">
    <source>
        <dbReference type="UniProtKB" id="Q3U7U3"/>
    </source>
</evidence>
<evidence type="ECO:0000250" key="3">
    <source>
        <dbReference type="UniProtKB" id="Q9Y3I1"/>
    </source>
</evidence>
<evidence type="ECO:0000255" key="4">
    <source>
        <dbReference type="PROSITE-ProRule" id="PRU00080"/>
    </source>
</evidence>
<evidence type="ECO:0000256" key="5">
    <source>
        <dbReference type="SAM" id="MobiDB-lite"/>
    </source>
</evidence>
<protein>
    <recommendedName>
        <fullName>F-box only protein 7</fullName>
    </recommendedName>
</protein>
<feature type="chain" id="PRO_0000307723" description="F-box only protein 7">
    <location>
        <begin position="1"/>
        <end position="522"/>
    </location>
</feature>
<feature type="domain" description="F-box" evidence="4">
    <location>
        <begin position="329"/>
        <end position="375"/>
    </location>
</feature>
<feature type="region of interest" description="Ubiquitin-like" evidence="1">
    <location>
        <begin position="1"/>
        <end position="88"/>
    </location>
</feature>
<feature type="region of interest" description="Disordered" evidence="5">
    <location>
        <begin position="1"/>
        <end position="20"/>
    </location>
</feature>
<feature type="region of interest" description="Disordered" evidence="5">
    <location>
        <begin position="85"/>
        <end position="128"/>
    </location>
</feature>
<feature type="region of interest" description="Important for interaction with PINK1" evidence="1">
    <location>
        <begin position="92"/>
        <end position="129"/>
    </location>
</feature>
<feature type="region of interest" description="Important for interaction with CDK6" evidence="1">
    <location>
        <begin position="129"/>
        <end position="169"/>
    </location>
</feature>
<feature type="region of interest" description="Important for dimerization and interaction with PSMF1" evidence="1">
    <location>
        <begin position="180"/>
        <end position="324"/>
    </location>
</feature>
<feature type="region of interest" description="Important for interaction with CDK6" evidence="1">
    <location>
        <begin position="381"/>
        <end position="522"/>
    </location>
</feature>
<feature type="region of interest" description="Disordered" evidence="5">
    <location>
        <begin position="459"/>
        <end position="522"/>
    </location>
</feature>
<feature type="short sequence motif" description="RFDP motif">
    <location>
        <begin position="481"/>
        <end position="484"/>
    </location>
</feature>
<feature type="compositionally biased region" description="Polar residues" evidence="5">
    <location>
        <begin position="87"/>
        <end position="114"/>
    </location>
</feature>
<feature type="modified residue" description="Omega-N-methylarginine" evidence="2">
    <location>
        <position position="431"/>
    </location>
</feature>
<feature type="modified residue" description="Omega-N-methylarginine" evidence="2">
    <location>
        <position position="451"/>
    </location>
</feature>
<feature type="modified residue" description="Asymmetric dimethylarginine" evidence="2">
    <location>
        <position position="518"/>
    </location>
</feature>
<dbReference type="EMBL" id="BC079382">
    <property type="protein sequence ID" value="AAH79382.1"/>
    <property type="molecule type" value="mRNA"/>
</dbReference>
<dbReference type="RefSeq" id="NP_001012222.1">
    <property type="nucleotide sequence ID" value="NM_001012222.1"/>
</dbReference>
<dbReference type="SMR" id="Q68FS3"/>
<dbReference type="FunCoup" id="Q68FS3">
    <property type="interactions" value="2162"/>
</dbReference>
<dbReference type="STRING" id="10116.ENSRNOP00000006366"/>
<dbReference type="iPTMnet" id="Q68FS3"/>
<dbReference type="PhosphoSitePlus" id="Q68FS3"/>
<dbReference type="jPOST" id="Q68FS3"/>
<dbReference type="PaxDb" id="10116-ENSRNOP00000006366"/>
<dbReference type="Ensembl" id="ENSRNOT00000006366.8">
    <property type="protein sequence ID" value="ENSRNOP00000006366.5"/>
    <property type="gene ID" value="ENSRNOG00000004637.8"/>
</dbReference>
<dbReference type="GeneID" id="366854"/>
<dbReference type="KEGG" id="rno:366854"/>
<dbReference type="UCSC" id="RGD:1305648">
    <property type="organism name" value="rat"/>
</dbReference>
<dbReference type="AGR" id="RGD:1305648"/>
<dbReference type="CTD" id="25793"/>
<dbReference type="RGD" id="1305648">
    <property type="gene designation" value="Fbxo7"/>
</dbReference>
<dbReference type="eggNOG" id="ENOG502QTNJ">
    <property type="taxonomic scope" value="Eukaryota"/>
</dbReference>
<dbReference type="GeneTree" id="ENSGT00390000006670"/>
<dbReference type="InParanoid" id="Q68FS3"/>
<dbReference type="OMA" id="QRPNLPH"/>
<dbReference type="OrthoDB" id="101791at2759"/>
<dbReference type="PhylomeDB" id="Q68FS3"/>
<dbReference type="TreeFam" id="TF329830"/>
<dbReference type="Reactome" id="R-RNO-8951664">
    <property type="pathway name" value="Neddylation"/>
</dbReference>
<dbReference type="Reactome" id="R-RNO-983168">
    <property type="pathway name" value="Antigen processing: Ubiquitination &amp; Proteasome degradation"/>
</dbReference>
<dbReference type="UniPathway" id="UPA00143"/>
<dbReference type="PRO" id="PR:Q68FS3"/>
<dbReference type="Proteomes" id="UP000002494">
    <property type="component" value="Chromosome 7"/>
</dbReference>
<dbReference type="Bgee" id="ENSRNOG00000004637">
    <property type="expression patterns" value="Expressed in testis and 20 other cell types or tissues"/>
</dbReference>
<dbReference type="ExpressionAtlas" id="Q68FS3">
    <property type="expression patterns" value="baseline and differential"/>
</dbReference>
<dbReference type="GO" id="GO:0097414">
    <property type="term" value="C:classical Lewy body"/>
    <property type="evidence" value="ECO:0000266"/>
    <property type="project" value="RGD"/>
</dbReference>
<dbReference type="GO" id="GO:0005737">
    <property type="term" value="C:cytoplasm"/>
    <property type="evidence" value="ECO:0000266"/>
    <property type="project" value="RGD"/>
</dbReference>
<dbReference type="GO" id="GO:0005829">
    <property type="term" value="C:cytosol"/>
    <property type="evidence" value="ECO:0000250"/>
    <property type="project" value="UniProtKB"/>
</dbReference>
<dbReference type="GO" id="GO:0097409">
    <property type="term" value="C:glial cytoplasmic inclusion"/>
    <property type="evidence" value="ECO:0000266"/>
    <property type="project" value="RGD"/>
</dbReference>
<dbReference type="GO" id="GO:1990037">
    <property type="term" value="C:Lewy body core"/>
    <property type="evidence" value="ECO:0000266"/>
    <property type="project" value="RGD"/>
</dbReference>
<dbReference type="GO" id="GO:1990038">
    <property type="term" value="C:Lewy body corona"/>
    <property type="evidence" value="ECO:0000266"/>
    <property type="project" value="RGD"/>
</dbReference>
<dbReference type="GO" id="GO:0097462">
    <property type="term" value="C:Lewy neurite"/>
    <property type="evidence" value="ECO:0000266"/>
    <property type="project" value="RGD"/>
</dbReference>
<dbReference type="GO" id="GO:0005739">
    <property type="term" value="C:mitochondrion"/>
    <property type="evidence" value="ECO:0000250"/>
    <property type="project" value="UniProtKB"/>
</dbReference>
<dbReference type="GO" id="GO:0005654">
    <property type="term" value="C:nucleoplasm"/>
    <property type="evidence" value="ECO:0007669"/>
    <property type="project" value="Ensembl"/>
</dbReference>
<dbReference type="GO" id="GO:0005634">
    <property type="term" value="C:nucleus"/>
    <property type="evidence" value="ECO:0000266"/>
    <property type="project" value="RGD"/>
</dbReference>
<dbReference type="GO" id="GO:0019005">
    <property type="term" value="C:SCF ubiquitin ligase complex"/>
    <property type="evidence" value="ECO:0000266"/>
    <property type="project" value="RGD"/>
</dbReference>
<dbReference type="GO" id="GO:0000151">
    <property type="term" value="C:ubiquitin ligase complex"/>
    <property type="evidence" value="ECO:0000250"/>
    <property type="project" value="UniProtKB"/>
</dbReference>
<dbReference type="GO" id="GO:0046982">
    <property type="term" value="F:protein heterodimerization activity"/>
    <property type="evidence" value="ECO:0000266"/>
    <property type="project" value="RGD"/>
</dbReference>
<dbReference type="GO" id="GO:0019901">
    <property type="term" value="F:protein kinase binding"/>
    <property type="evidence" value="ECO:0000266"/>
    <property type="project" value="RGD"/>
</dbReference>
<dbReference type="GO" id="GO:0043130">
    <property type="term" value="F:ubiquitin binding"/>
    <property type="evidence" value="ECO:0000266"/>
    <property type="project" value="RGD"/>
</dbReference>
<dbReference type="GO" id="GO:0031625">
    <property type="term" value="F:ubiquitin protein ligase binding"/>
    <property type="evidence" value="ECO:0000266"/>
    <property type="project" value="RGD"/>
</dbReference>
<dbReference type="GO" id="GO:1990756">
    <property type="term" value="F:ubiquitin-like ligase-substrate adaptor activity"/>
    <property type="evidence" value="ECO:0000266"/>
    <property type="project" value="RGD"/>
</dbReference>
<dbReference type="GO" id="GO:0000422">
    <property type="term" value="P:autophagy of mitochondrion"/>
    <property type="evidence" value="ECO:0000250"/>
    <property type="project" value="UniProtKB"/>
</dbReference>
<dbReference type="GO" id="GO:0030098">
    <property type="term" value="P:lymphocyte differentiation"/>
    <property type="evidence" value="ECO:0000266"/>
    <property type="project" value="RGD"/>
</dbReference>
<dbReference type="GO" id="GO:2000134">
    <property type="term" value="P:negative regulation of G1/S transition of mitotic cell cycle"/>
    <property type="evidence" value="ECO:0000266"/>
    <property type="project" value="RGD"/>
</dbReference>
<dbReference type="GO" id="GO:0045620">
    <property type="term" value="P:negative regulation of lymphocyte differentiation"/>
    <property type="evidence" value="ECO:0000266"/>
    <property type="project" value="RGD"/>
</dbReference>
<dbReference type="GO" id="GO:0043524">
    <property type="term" value="P:negative regulation of neuron apoptotic process"/>
    <property type="evidence" value="ECO:0000315"/>
    <property type="project" value="ParkinsonsUK-UCL"/>
</dbReference>
<dbReference type="GO" id="GO:1903377">
    <property type="term" value="P:negative regulation of oxidative stress-induced neuron intrinsic apoptotic signaling pathway"/>
    <property type="evidence" value="ECO:0000266"/>
    <property type="project" value="RGD"/>
</dbReference>
<dbReference type="GO" id="GO:1903599">
    <property type="term" value="P:positive regulation of autophagy of mitochondrion"/>
    <property type="evidence" value="ECO:0000318"/>
    <property type="project" value="GO_Central"/>
</dbReference>
<dbReference type="GO" id="GO:1901526">
    <property type="term" value="P:positive regulation of mitophagy"/>
    <property type="evidence" value="ECO:0000315"/>
    <property type="project" value="ParkinsonsUK-UCL"/>
</dbReference>
<dbReference type="GO" id="GO:0043161">
    <property type="term" value="P:proteasome-mediated ubiquitin-dependent protein catabolic process"/>
    <property type="evidence" value="ECO:0000266"/>
    <property type="project" value="RGD"/>
</dbReference>
<dbReference type="GO" id="GO:0070936">
    <property type="term" value="P:protein K48-linked ubiquitination"/>
    <property type="evidence" value="ECO:0000266"/>
    <property type="project" value="RGD"/>
</dbReference>
<dbReference type="GO" id="GO:0006626">
    <property type="term" value="P:protein targeting to mitochondrion"/>
    <property type="evidence" value="ECO:0000250"/>
    <property type="project" value="UniProtKB"/>
</dbReference>
<dbReference type="GO" id="GO:0016567">
    <property type="term" value="P:protein ubiquitination"/>
    <property type="evidence" value="ECO:0000250"/>
    <property type="project" value="UniProtKB"/>
</dbReference>
<dbReference type="GO" id="GO:0040012">
    <property type="term" value="P:regulation of locomotion"/>
    <property type="evidence" value="ECO:0000266"/>
    <property type="project" value="RGD"/>
</dbReference>
<dbReference type="GO" id="GO:0010975">
    <property type="term" value="P:regulation of neuron projection development"/>
    <property type="evidence" value="ECO:0000266"/>
    <property type="project" value="RGD"/>
</dbReference>
<dbReference type="GO" id="GO:0031647">
    <property type="term" value="P:regulation of protein stability"/>
    <property type="evidence" value="ECO:0000266"/>
    <property type="project" value="RGD"/>
</dbReference>
<dbReference type="GO" id="GO:0006511">
    <property type="term" value="P:ubiquitin-dependent protein catabolic process"/>
    <property type="evidence" value="ECO:0000266"/>
    <property type="project" value="RGD"/>
</dbReference>
<dbReference type="CDD" id="cd22087">
    <property type="entry name" value="F-box_FBXO7"/>
    <property type="match status" value="1"/>
</dbReference>
<dbReference type="FunFam" id="1.20.1280.50:FF:000010">
    <property type="entry name" value="F-box only protein 7"/>
    <property type="match status" value="1"/>
</dbReference>
<dbReference type="FunFam" id="3.40.1000.30:FF:000001">
    <property type="entry name" value="F-box only protein 7"/>
    <property type="match status" value="1"/>
</dbReference>
<dbReference type="Gene3D" id="1.20.1280.50">
    <property type="match status" value="1"/>
</dbReference>
<dbReference type="Gene3D" id="3.40.1000.30">
    <property type="match status" value="1"/>
</dbReference>
<dbReference type="InterPro" id="IPR036047">
    <property type="entry name" value="F-box-like_dom_sf"/>
</dbReference>
<dbReference type="InterPro" id="IPR001810">
    <property type="entry name" value="F-box_dom"/>
</dbReference>
<dbReference type="InterPro" id="IPR047118">
    <property type="entry name" value="Fbxo7"/>
</dbReference>
<dbReference type="InterPro" id="IPR021625">
    <property type="entry name" value="PI31_Prot_N"/>
</dbReference>
<dbReference type="PANTHER" id="PTHR15537">
    <property type="entry name" value="F-BOX ONLY PROTEIN 7"/>
    <property type="match status" value="1"/>
</dbReference>
<dbReference type="PANTHER" id="PTHR15537:SF2">
    <property type="entry name" value="F-BOX ONLY PROTEIN 7"/>
    <property type="match status" value="1"/>
</dbReference>
<dbReference type="Pfam" id="PF12937">
    <property type="entry name" value="F-box-like"/>
    <property type="match status" value="1"/>
</dbReference>
<dbReference type="Pfam" id="PF11566">
    <property type="entry name" value="PI31_Prot_N"/>
    <property type="match status" value="1"/>
</dbReference>
<dbReference type="SUPFAM" id="SSF81383">
    <property type="entry name" value="F-box domain"/>
    <property type="match status" value="1"/>
</dbReference>
<dbReference type="PROSITE" id="PS50181">
    <property type="entry name" value="FBOX"/>
    <property type="match status" value="1"/>
</dbReference>